<feature type="chain" id="PRO_0000448053" description="(R)-citramalate synthase">
    <location>
        <begin position="1"/>
        <end position="523"/>
    </location>
</feature>
<feature type="domain" description="Pyruvate carboxyltransferase" evidence="1">
    <location>
        <begin position="6"/>
        <end position="272"/>
    </location>
</feature>
<reference key="1">
    <citation type="journal article" date="2005" name="J. Bacteriol.">
        <title>The genome of Sulfolobus acidocaldarius, a model organism of the Crenarchaeota.</title>
        <authorList>
            <person name="Chen L."/>
            <person name="Bruegger K."/>
            <person name="Skovgaard M."/>
            <person name="Redder P."/>
            <person name="She Q."/>
            <person name="Torarinsson E."/>
            <person name="Greve B."/>
            <person name="Awayez M."/>
            <person name="Zibat A."/>
            <person name="Klenk H.-P."/>
            <person name="Garrett R.A."/>
        </authorList>
    </citation>
    <scope>NUCLEOTIDE SEQUENCE [LARGE SCALE GENOMIC DNA]</scope>
    <source>
        <strain>ATCC 33909 / DSM 639 / JCM 8929 / NBRC 15157 / NCIMB 11770</strain>
    </source>
</reference>
<reference key="2">
    <citation type="journal article" date="2020" name="FEBS Lett.">
        <title>Biochemical characterization of archaeal homocitrate synthase from Sulfolobus acidocaldarius.</title>
        <authorList>
            <person name="Suzuki T."/>
            <person name="Akiyama N."/>
            <person name="Yoshida A."/>
            <person name="Tomita T."/>
            <person name="Lassak K."/>
            <person name="Haurat M.F."/>
            <person name="Okada T."/>
            <person name="Takahashi K."/>
            <person name="Albers S.V."/>
            <person name="Kuzuyama T."/>
            <person name="Nishiyama M."/>
        </authorList>
    </citation>
    <scope>FUNCTION</scope>
    <scope>CATALYTIC ACTIVITY</scope>
    <scope>SUBSTRATE SPECIFICITY</scope>
    <scope>ACTIVITY REGULATION</scope>
    <scope>PATHWAY</scope>
    <scope>DISRUPTION PHENOTYPE</scope>
</reference>
<evidence type="ECO:0000255" key="1">
    <source>
        <dbReference type="PROSITE-ProRule" id="PRU01151"/>
    </source>
</evidence>
<evidence type="ECO:0000269" key="2">
    <source>
    </source>
</evidence>
<evidence type="ECO:0000303" key="3">
    <source>
    </source>
</evidence>
<evidence type="ECO:0000305" key="4"/>
<evidence type="ECO:0000305" key="5">
    <source>
    </source>
</evidence>
<evidence type="ECO:0000312" key="6">
    <source>
        <dbReference type="EMBL" id="AAY81610.1"/>
    </source>
</evidence>
<organism>
    <name type="scientific">Sulfolobus acidocaldarius (strain ATCC 33909 / DSM 639 / JCM 8929 / NBRC 15157 / NCIMB 11770)</name>
    <dbReference type="NCBI Taxonomy" id="330779"/>
    <lineage>
        <taxon>Archaea</taxon>
        <taxon>Thermoproteota</taxon>
        <taxon>Thermoprotei</taxon>
        <taxon>Sulfolobales</taxon>
        <taxon>Sulfolobaceae</taxon>
        <taxon>Sulfolobus</taxon>
    </lineage>
</organism>
<name>CIMA_SULAC</name>
<keyword id="KW-0012">Acyltransferase</keyword>
<keyword id="KW-0028">Amino-acid biosynthesis</keyword>
<keyword id="KW-0100">Branched-chain amino acid biosynthesis</keyword>
<keyword id="KW-0412">Isoleucine biosynthesis</keyword>
<keyword id="KW-1185">Reference proteome</keyword>
<keyword id="KW-0808">Transferase</keyword>
<gene>
    <name evidence="6" type="primary">cimA</name>
    <name evidence="6" type="ordered locus">Saci_2325</name>
</gene>
<sequence>MFTKSVEVLDTTLRDGAQTANISFTLNDKIRIALLLDELGVDYIEGGWPSSNPKDEEFFKEIKKYKLTKARIAAFGSTRKKESTAKEDQSLNSIIKADVDVGVLFGKSWSLHVTDVLKISLEENLDIIYDSVNYLKSHGLRVVYDAEHFYQGYKENREYALKAVKTAEEAGADVIVLCDTNGGTLPHEVYNITKDVVNHVKVKIGLHMHNDSGGAVANTVMGVVAGARHVQGTINGIGERTGNADLIQVIPNIMLKLGLNSLKGNESLKKLKEVSRVVYEIIGVHPNPYQPYVGDFAFTHKAGVHADAVMKVTRAYEHIDPTLVGNNRRFVISEVAGSSNVIYYLEKLGIKVDKKDPRVRNAVQRIKELENRGYSFDLAPASAVLVALRDLGMYRDLIKVEYWKVMNEKELAIAIVKVNGQLEVAEGVGPVHSVDIALRKALQKVYPQINKVKLTDYRVILPGEIKNTESVVRVTIEFTDGEKNWRTEGVSTSVIEASVIALIDGLDYYLQTEKLIKSEVINN</sequence>
<proteinExistence type="evidence at protein level"/>
<dbReference type="EC" id="2.3.3.21" evidence="2"/>
<dbReference type="EMBL" id="CP000077">
    <property type="protein sequence ID" value="AAY81610.1"/>
    <property type="molecule type" value="Genomic_DNA"/>
</dbReference>
<dbReference type="RefSeq" id="WP_011279112.1">
    <property type="nucleotide sequence ID" value="NC_007181.1"/>
</dbReference>
<dbReference type="SMR" id="Q4J6H1"/>
<dbReference type="STRING" id="330779.Saci_2325"/>
<dbReference type="GeneID" id="14552837"/>
<dbReference type="GeneID" id="78440312"/>
<dbReference type="KEGG" id="sai:Saci_2325"/>
<dbReference type="PATRIC" id="fig|330779.12.peg.2335"/>
<dbReference type="eggNOG" id="arCOG02092">
    <property type="taxonomic scope" value="Archaea"/>
</dbReference>
<dbReference type="HOGENOM" id="CLU_022158_7_0_2"/>
<dbReference type="UniPathway" id="UPA00047">
    <property type="reaction ID" value="UER00066"/>
</dbReference>
<dbReference type="Proteomes" id="UP000001018">
    <property type="component" value="Chromosome"/>
</dbReference>
<dbReference type="GO" id="GO:0043714">
    <property type="term" value="F:(R)-citramalate synthase activity"/>
    <property type="evidence" value="ECO:0007669"/>
    <property type="project" value="RHEA"/>
</dbReference>
<dbReference type="GO" id="GO:0003852">
    <property type="term" value="F:2-isopropylmalate synthase activity"/>
    <property type="evidence" value="ECO:0007669"/>
    <property type="project" value="InterPro"/>
</dbReference>
<dbReference type="GO" id="GO:0009097">
    <property type="term" value="P:isoleucine biosynthetic process"/>
    <property type="evidence" value="ECO:0007669"/>
    <property type="project" value="UniProtKB-UniPathway"/>
</dbReference>
<dbReference type="GO" id="GO:0009098">
    <property type="term" value="P:L-leucine biosynthetic process"/>
    <property type="evidence" value="ECO:0007669"/>
    <property type="project" value="InterPro"/>
</dbReference>
<dbReference type="CDD" id="cd07941">
    <property type="entry name" value="DRE_TIM_LeuA3"/>
    <property type="match status" value="1"/>
</dbReference>
<dbReference type="Gene3D" id="1.10.238.260">
    <property type="match status" value="1"/>
</dbReference>
<dbReference type="Gene3D" id="3.30.160.270">
    <property type="match status" value="1"/>
</dbReference>
<dbReference type="Gene3D" id="3.20.20.70">
    <property type="entry name" value="Aldolase class I"/>
    <property type="match status" value="1"/>
</dbReference>
<dbReference type="InterPro" id="IPR013709">
    <property type="entry name" value="2-isopropylmalate_synth_dimer"/>
</dbReference>
<dbReference type="InterPro" id="IPR002034">
    <property type="entry name" value="AIPM/Hcit_synth_CS"/>
</dbReference>
<dbReference type="InterPro" id="IPR013785">
    <property type="entry name" value="Aldolase_TIM"/>
</dbReference>
<dbReference type="InterPro" id="IPR005675">
    <property type="entry name" value="Citramal_synthase"/>
</dbReference>
<dbReference type="InterPro" id="IPR054691">
    <property type="entry name" value="LeuA/HCS_post-cat"/>
</dbReference>
<dbReference type="InterPro" id="IPR036230">
    <property type="entry name" value="LeuA_allosteric_dom_sf"/>
</dbReference>
<dbReference type="InterPro" id="IPR000891">
    <property type="entry name" value="PYR_CT"/>
</dbReference>
<dbReference type="NCBIfam" id="TIGR00977">
    <property type="entry name" value="citramal_synth"/>
    <property type="match status" value="1"/>
</dbReference>
<dbReference type="PANTHER" id="PTHR43538:SF1">
    <property type="entry name" value="(R)-CITRAMALATE SYNTHASE"/>
    <property type="match status" value="1"/>
</dbReference>
<dbReference type="PANTHER" id="PTHR43538">
    <property type="entry name" value="ALPHA-IPM SYNTHASE/HOMOCITRATE SYNTHASE"/>
    <property type="match status" value="1"/>
</dbReference>
<dbReference type="Pfam" id="PF22617">
    <property type="entry name" value="HCS_D2"/>
    <property type="match status" value="1"/>
</dbReference>
<dbReference type="Pfam" id="PF00682">
    <property type="entry name" value="HMGL-like"/>
    <property type="match status" value="1"/>
</dbReference>
<dbReference type="Pfam" id="PF08502">
    <property type="entry name" value="LeuA_dimer"/>
    <property type="match status" value="1"/>
</dbReference>
<dbReference type="SMART" id="SM00917">
    <property type="entry name" value="LeuA_dimer"/>
    <property type="match status" value="1"/>
</dbReference>
<dbReference type="SUPFAM" id="SSF110921">
    <property type="entry name" value="2-isopropylmalate synthase LeuA, allosteric (dimerisation) domain"/>
    <property type="match status" value="1"/>
</dbReference>
<dbReference type="SUPFAM" id="SSF51569">
    <property type="entry name" value="Aldolase"/>
    <property type="match status" value="1"/>
</dbReference>
<dbReference type="PROSITE" id="PS00815">
    <property type="entry name" value="AIPM_HOMOCIT_SYNTH_1"/>
    <property type="match status" value="1"/>
</dbReference>
<dbReference type="PROSITE" id="PS00816">
    <property type="entry name" value="AIPM_HOMOCIT_SYNTH_2"/>
    <property type="match status" value="1"/>
</dbReference>
<dbReference type="PROSITE" id="PS50991">
    <property type="entry name" value="PYR_CT"/>
    <property type="match status" value="1"/>
</dbReference>
<comment type="function">
    <text evidence="2">Catalyzes the condensation of pyruvate and acetyl-coenzyme A to form (R)-citramalate. Makes part of a pathway for isoleucine biosynthesis, i.e. the citramalate-dependent pathway. Also displays a low alpha-isopropylmalate synthase activity, using 2-oxoisovalerate as substrate, but is unable to use 2-oxoglutarate.</text>
</comment>
<comment type="catalytic activity">
    <reaction evidence="2">
        <text>pyruvate + acetyl-CoA + H2O = (3R)-citramalate + CoA + H(+)</text>
        <dbReference type="Rhea" id="RHEA:19045"/>
        <dbReference type="ChEBI" id="CHEBI:15361"/>
        <dbReference type="ChEBI" id="CHEBI:15377"/>
        <dbReference type="ChEBI" id="CHEBI:15378"/>
        <dbReference type="ChEBI" id="CHEBI:30934"/>
        <dbReference type="ChEBI" id="CHEBI:57287"/>
        <dbReference type="ChEBI" id="CHEBI:57288"/>
        <dbReference type="EC" id="2.3.3.21"/>
    </reaction>
    <physiologicalReaction direction="left-to-right" evidence="2">
        <dbReference type="Rhea" id="RHEA:19046"/>
    </physiologicalReaction>
</comment>
<comment type="activity regulation">
    <text evidence="2">Inhibited by isoleucine.</text>
</comment>
<comment type="pathway">
    <text evidence="2">Amino-acid biosynthesis; L-isoleucine biosynthesis; 2-oxobutanoate from pyruvate: step 1/3.</text>
</comment>
<comment type="disruption phenotype">
    <text evidence="2">Cells lacking this gene show slow growth in MM, and the addition of isoleucine or citramalate restores the growth of the mutant.</text>
</comment>
<comment type="similarity">
    <text evidence="4">Belongs to the alpha-IPM synthase/homocitrate synthase family.</text>
</comment>
<protein>
    <recommendedName>
        <fullName evidence="5">(R)-citramalate synthase</fullName>
        <ecNumber evidence="2">2.3.3.21</ecNumber>
    </recommendedName>
    <alternativeName>
        <fullName evidence="3">Citramalate synthase</fullName>
        <shortName evidence="3">CMS</shortName>
    </alternativeName>
</protein>
<accession>Q4J6H1</accession>